<organism>
    <name type="scientific">Buchnera aphidicola subsp. Acyrthosiphon pisum (strain APS)</name>
    <name type="common">Acyrthosiphon pisum symbiotic bacterium</name>
    <dbReference type="NCBI Taxonomy" id="107806"/>
    <lineage>
        <taxon>Bacteria</taxon>
        <taxon>Pseudomonadati</taxon>
        <taxon>Pseudomonadota</taxon>
        <taxon>Gammaproteobacteria</taxon>
        <taxon>Enterobacterales</taxon>
        <taxon>Erwiniaceae</taxon>
        <taxon>Buchnera</taxon>
    </lineage>
</organism>
<dbReference type="EC" id="3.1.3.25" evidence="2"/>
<dbReference type="EMBL" id="BA000003">
    <property type="protein sequence ID" value="BAB12995.1"/>
    <property type="molecule type" value="Genomic_DNA"/>
</dbReference>
<dbReference type="RefSeq" id="NP_240109.1">
    <property type="nucleotide sequence ID" value="NC_002528.1"/>
</dbReference>
<dbReference type="RefSeq" id="WP_009874239.1">
    <property type="nucleotide sequence ID" value="NZ_AP036055.1"/>
</dbReference>
<dbReference type="SMR" id="P57372"/>
<dbReference type="STRING" id="563178.BUAP5A_280"/>
<dbReference type="EnsemblBacteria" id="BAB12995">
    <property type="protein sequence ID" value="BAB12995"/>
    <property type="gene ID" value="BAB12995"/>
</dbReference>
<dbReference type="KEGG" id="buc:BU285"/>
<dbReference type="PATRIC" id="fig|107806.10.peg.295"/>
<dbReference type="eggNOG" id="COG0483">
    <property type="taxonomic scope" value="Bacteria"/>
</dbReference>
<dbReference type="HOGENOM" id="CLU_044118_0_0_6"/>
<dbReference type="Proteomes" id="UP000001806">
    <property type="component" value="Chromosome"/>
</dbReference>
<dbReference type="GO" id="GO:0005737">
    <property type="term" value="C:cytoplasm"/>
    <property type="evidence" value="ECO:0007669"/>
    <property type="project" value="UniProtKB-SubCell"/>
</dbReference>
<dbReference type="GO" id="GO:0008934">
    <property type="term" value="F:inositol monophosphate 1-phosphatase activity"/>
    <property type="evidence" value="ECO:0007669"/>
    <property type="project" value="InterPro"/>
</dbReference>
<dbReference type="GO" id="GO:0003723">
    <property type="term" value="F:RNA binding"/>
    <property type="evidence" value="ECO:0007669"/>
    <property type="project" value="UniProtKB-KW"/>
</dbReference>
<dbReference type="GO" id="GO:0006020">
    <property type="term" value="P:inositol metabolic process"/>
    <property type="evidence" value="ECO:0007669"/>
    <property type="project" value="TreeGrafter"/>
</dbReference>
<dbReference type="GO" id="GO:0042254">
    <property type="term" value="P:ribosome biogenesis"/>
    <property type="evidence" value="ECO:0007669"/>
    <property type="project" value="UniProtKB-KW"/>
</dbReference>
<dbReference type="GO" id="GO:0007165">
    <property type="term" value="P:signal transduction"/>
    <property type="evidence" value="ECO:0007669"/>
    <property type="project" value="TreeGrafter"/>
</dbReference>
<dbReference type="GO" id="GO:0031564">
    <property type="term" value="P:transcription antitermination"/>
    <property type="evidence" value="ECO:0007669"/>
    <property type="project" value="UniProtKB-KW"/>
</dbReference>
<dbReference type="CDD" id="cd01639">
    <property type="entry name" value="IMPase"/>
    <property type="match status" value="1"/>
</dbReference>
<dbReference type="Gene3D" id="3.40.190.80">
    <property type="match status" value="1"/>
</dbReference>
<dbReference type="Gene3D" id="3.30.540.10">
    <property type="entry name" value="Fructose-1,6-Bisphosphatase, subunit A, domain 1"/>
    <property type="match status" value="1"/>
</dbReference>
<dbReference type="InterPro" id="IPR033942">
    <property type="entry name" value="IMPase"/>
</dbReference>
<dbReference type="InterPro" id="IPR000760">
    <property type="entry name" value="Inositol_monophosphatase-like"/>
</dbReference>
<dbReference type="InterPro" id="IPR022337">
    <property type="entry name" value="Inositol_monophosphatase_SuhB"/>
</dbReference>
<dbReference type="PANTHER" id="PTHR20854">
    <property type="entry name" value="INOSITOL MONOPHOSPHATASE"/>
    <property type="match status" value="1"/>
</dbReference>
<dbReference type="PANTHER" id="PTHR20854:SF4">
    <property type="entry name" value="INOSITOL-1-MONOPHOSPHATASE-RELATED"/>
    <property type="match status" value="1"/>
</dbReference>
<dbReference type="Pfam" id="PF00459">
    <property type="entry name" value="Inositol_P"/>
    <property type="match status" value="1"/>
</dbReference>
<dbReference type="PRINTS" id="PR00377">
    <property type="entry name" value="IMPHPHTASES"/>
</dbReference>
<dbReference type="PRINTS" id="PR01959">
    <property type="entry name" value="SBIMPHPHTASE"/>
</dbReference>
<dbReference type="SUPFAM" id="SSF56655">
    <property type="entry name" value="Carbohydrate phosphatase"/>
    <property type="match status" value="1"/>
</dbReference>
<feature type="chain" id="PRO_0000142555" description="Nus factor SuhB">
    <location>
        <begin position="1"/>
        <end position="266"/>
    </location>
</feature>
<feature type="binding site" evidence="1">
    <location>
        <begin position="87"/>
        <end position="90"/>
    </location>
    <ligand>
        <name>substrate</name>
    </ligand>
</feature>
<keyword id="KW-0143">Chaperone</keyword>
<keyword id="KW-0963">Cytoplasm</keyword>
<keyword id="KW-0378">Hydrolase</keyword>
<keyword id="KW-1185">Reference proteome</keyword>
<keyword id="KW-0690">Ribosome biogenesis</keyword>
<keyword id="KW-0694">RNA-binding</keyword>
<keyword id="KW-0804">Transcription</keyword>
<keyword id="KW-0889">Transcription antitermination</keyword>
<keyword id="KW-0805">Transcription regulation</keyword>
<name>SUHB_BUCAI</name>
<gene>
    <name type="primary">suhB</name>
    <name type="ordered locus">BU285</name>
</gene>
<proteinExistence type="inferred from homology"/>
<accession>P57372</accession>
<comment type="function">
    <text evidence="2">Part of the processive rRNA transcription and antitermination complex (rrnTAC). The complex forms an RNA-chaperone ring around the RNA exit tunnel of RNA polymerase (RNAP). It supports rapid transcription and antitermination of rRNA operons, cotranscriptional rRNA folding, and annealing of distal rRNA regions to allow correct ribosome biogenesis. This subunit may play a central role in organizing the structure.</text>
</comment>
<comment type="catalytic activity">
    <reaction evidence="2">
        <text>a myo-inositol phosphate + H2O = myo-inositol + phosphate</text>
        <dbReference type="Rhea" id="RHEA:24056"/>
        <dbReference type="ChEBI" id="CHEBI:15377"/>
        <dbReference type="ChEBI" id="CHEBI:17268"/>
        <dbReference type="ChEBI" id="CHEBI:43474"/>
        <dbReference type="ChEBI" id="CHEBI:84139"/>
        <dbReference type="EC" id="3.1.3.25"/>
    </reaction>
</comment>
<comment type="cofactor">
    <cofactor evidence="2">
        <name>Mg(2+)</name>
        <dbReference type="ChEBI" id="CHEBI:18420"/>
    </cofactor>
</comment>
<comment type="subunit">
    <text evidence="2">Homodimer. The rRNA transcription and antitermination complex (rrnTAC) consists of RNA polymerase (RNAP), NusA, NusB, NusE (rpsJ), NusG, SubB, ribosomal protein S4, DNA and precursor rRNA; S4 is more flexible than other subunits.</text>
</comment>
<comment type="subcellular location">
    <subcellularLocation>
        <location evidence="2">Cytoplasm</location>
    </subcellularLocation>
</comment>
<comment type="similarity">
    <text evidence="3">Belongs to the inositol monophosphatase superfamily.</text>
</comment>
<reference key="1">
    <citation type="journal article" date="2000" name="Nature">
        <title>Genome sequence of the endocellular bacterial symbiont of aphids Buchnera sp. APS.</title>
        <authorList>
            <person name="Shigenobu S."/>
            <person name="Watanabe H."/>
            <person name="Hattori M."/>
            <person name="Sakaki Y."/>
            <person name="Ishikawa H."/>
        </authorList>
    </citation>
    <scope>NUCLEOTIDE SEQUENCE [LARGE SCALE GENOMIC DNA]</scope>
    <source>
        <strain>APS</strain>
    </source>
</reference>
<evidence type="ECO:0000250" key="1"/>
<evidence type="ECO:0000250" key="2">
    <source>
        <dbReference type="UniProtKB" id="P0ADG4"/>
    </source>
</evidence>
<evidence type="ECO:0000305" key="3"/>
<protein>
    <recommendedName>
        <fullName evidence="2">Nus factor SuhB</fullName>
    </recommendedName>
    <alternativeName>
        <fullName>Inositol-1-monophosphatase</fullName>
        <shortName>I-1-Pase</shortName>
        <shortName>IMPase</shortName>
        <shortName>Inositol-1-phosphatase</shortName>
        <ecNumber evidence="2">3.1.3.25</ecNumber>
    </alternativeName>
</protein>
<sequence>MHPMLNIAIRAVRKGGNFIIQNYERRKFVKEDVEKNKVFLNNIIYKTNKIISEIIHKSYPYHTILKKHENILVKKNEKNTVWIITELDGKTNFLKYFPYFCVSIAVVVKNKTEISVIYDPIKNDLFTAVKGQGSQLNGYRTRCSAINTLNYSTVAVNPSNKIHNLTSSYFEIYKKLIISGISFRCTGSSILDSAYVAAGKIDCLFDFNLDPNKFVASKLQVREAGCLINNFMGEYEHNNNNYSGNITSSSKFIRLINEKIRECYLI</sequence>